<dbReference type="SMR" id="C0HJJ4"/>
<dbReference type="GO" id="GO:0005576">
    <property type="term" value="C:extracellular region"/>
    <property type="evidence" value="ECO:0007669"/>
    <property type="project" value="UniProtKB-SubCell"/>
</dbReference>
<dbReference type="GO" id="GO:0005179">
    <property type="term" value="F:hormone activity"/>
    <property type="evidence" value="ECO:0007669"/>
    <property type="project" value="UniProtKB-KW"/>
</dbReference>
<dbReference type="Gene3D" id="6.10.250.590">
    <property type="match status" value="1"/>
</dbReference>
<dbReference type="InterPro" id="IPR015550">
    <property type="entry name" value="Glucagon"/>
</dbReference>
<dbReference type="InterPro" id="IPR000532">
    <property type="entry name" value="Glucagon_GIP_secretin_VIP"/>
</dbReference>
<dbReference type="PANTHER" id="PTHR11418">
    <property type="entry name" value="GLUCAGON"/>
    <property type="match status" value="1"/>
</dbReference>
<dbReference type="PANTHER" id="PTHR11418:SF0">
    <property type="entry name" value="PRO-GLUCAGON"/>
    <property type="match status" value="1"/>
</dbReference>
<dbReference type="Pfam" id="PF00123">
    <property type="entry name" value="Hormone_2"/>
    <property type="match status" value="1"/>
</dbReference>
<dbReference type="SMART" id="SM00070">
    <property type="entry name" value="GLUCA"/>
    <property type="match status" value="1"/>
</dbReference>
<keyword id="KW-0903">Direct protein sequencing</keyword>
<keyword id="KW-0372">Hormone</keyword>
<keyword id="KW-0964">Secreted</keyword>
<comment type="function">
    <text evidence="1">Glucagon plays a key role in glucose metabolism and homeostasis. Regulates blood glucose by increasing gluconeogenesis and decreasing glycolysis (By similarity).</text>
</comment>
<comment type="subcellular location">
    <subcellularLocation>
        <location evidence="1">Secreted</location>
    </subcellularLocation>
</comment>
<comment type="induction">
    <text evidence="1">Produced in the A cells of the islets of Langerhans in response to a drop in blood sugar concentration.</text>
</comment>
<comment type="similarity">
    <text evidence="2">Belongs to the glucagon family.</text>
</comment>
<sequence length="36" mass="4325">HSQDTFTNEYNKYLEAKHAQEFVQWLIKSKRRGGLT</sequence>
<protein>
    <recommendedName>
        <fullName>Glucagon-2</fullName>
    </recommendedName>
    <alternativeName>
        <fullName evidence="4">Glucagon-II</fullName>
    </alternativeName>
</protein>
<feature type="peptide" id="PRO_0000429400" description="Glucagon-2" evidence="3">
    <location>
        <begin position="1"/>
        <end position="36"/>
    </location>
</feature>
<organism>
    <name type="scientific">Huso dauricus</name>
    <name type="common">Kaluga sturgeon</name>
    <name type="synonym">Acipenser dauricus</name>
    <dbReference type="NCBI Taxonomy" id="55293"/>
    <lineage>
        <taxon>Eukaryota</taxon>
        <taxon>Metazoa</taxon>
        <taxon>Chordata</taxon>
        <taxon>Craniata</taxon>
        <taxon>Vertebrata</taxon>
        <taxon>Euteleostomi</taxon>
        <taxon>Actinopterygii</taxon>
        <taxon>Chondrostei</taxon>
        <taxon>Acipenseriformes</taxon>
        <taxon>Acipenseridae</taxon>
        <taxon>Huso</taxon>
    </lineage>
</organism>
<accession>C0HJJ4</accession>
<name>GLUC2_HUSDA</name>
<evidence type="ECO:0000250" key="1"/>
<evidence type="ECO:0000255" key="2"/>
<evidence type="ECO:0000269" key="3">
    <source>
    </source>
</evidence>
<evidence type="ECO:0000303" key="4">
    <source>
    </source>
</evidence>
<evidence type="ECO:0000305" key="5"/>
<reference evidence="5" key="1">
    <citation type="journal article" date="2000" name="Peptides">
        <title>Multiple molecular forms of glucagon and insulin in the kaluga sturgeon, Huso dauricus.</title>
        <authorList>
            <person name="Andoh T."/>
            <person name="Nagasawa H."/>
            <person name="Matsubara T."/>
        </authorList>
    </citation>
    <scope>PROTEIN SEQUENCE</scope>
    <source>
        <tissue evidence="3">Pancreas</tissue>
    </source>
</reference>
<proteinExistence type="evidence at protein level"/>